<comment type="function">
    <text evidence="2 3 4 6">Assembles to form an icosahedral capsid with a T=1 symmetry, about 30 nm in diameter, and consisting of 60 capsid proteins F (PubMed:11991963, PubMed:1370343, PubMed:8158636). Upon virus binding to host cell, one of the spikes dissociates from the capsid and the virus interacts with LPS through the exposed EF loops on the F proteins (PubMed:29229840). After the genome had been ejected, the channel formed by the F proteins at the unique fivefold axis remains open (PubMed:29229840).</text>
</comment>
<comment type="subunit">
    <text evidence="1 7">Pentamerizes and interacts with H protein, G and B pentamers to form 12S pre-assembly complex. By binding with protein D, induces joining of twelve 12S complex to form the procapsid. The procapsid has an external scaffold made of 240 copies of protein D, 60 copies of the internally located B protein, and contains 60 copies of each of the viral structural proteins F and G. Upon genome packaging, interacts with protein J. The mature virion is composed of 60 copies each of the F, G, and J proteins, and 12 copies of the H protein.</text>
</comment>
<comment type="subcellular location">
    <subcellularLocation>
        <location evidence="1 3 4 6 7">Virion</location>
    </subcellularLocation>
</comment>
<comment type="similarity">
    <text evidence="8">Belongs to the microviridae F protein family.</text>
</comment>
<protein>
    <recommendedName>
        <fullName>Capsid protein F</fullName>
    </recommendedName>
    <alternativeName>
        <fullName>F protein</fullName>
    </alternativeName>
    <alternativeName>
        <fullName>GPF</fullName>
    </alternativeName>
</protein>
<dbReference type="EMBL" id="J02482">
    <property type="protein sequence ID" value="AAA32578.1"/>
    <property type="molecule type" value="Genomic_DNA"/>
</dbReference>
<dbReference type="PIR" id="B93185">
    <property type="entry name" value="ZFBPF4"/>
</dbReference>
<dbReference type="PDB" id="1AL0">
    <property type="method" value="X-ray"/>
    <property type="resolution" value="3.50 A"/>
    <property type="chains" value="F=2-427"/>
</dbReference>
<dbReference type="PDB" id="1CD3">
    <property type="method" value="X-ray"/>
    <property type="resolution" value="3.50 A"/>
    <property type="chains" value="F=2-427"/>
</dbReference>
<dbReference type="PDB" id="1KVP">
    <property type="method" value="EM"/>
    <property type="resolution" value="27.00 A"/>
    <property type="chains" value="A=2-427"/>
</dbReference>
<dbReference type="PDB" id="2BPA">
    <property type="method" value="X-ray"/>
    <property type="resolution" value="3.00 A"/>
    <property type="chains" value="1=2-427"/>
</dbReference>
<dbReference type="PDBsum" id="1AL0"/>
<dbReference type="PDBsum" id="1CD3"/>
<dbReference type="PDBsum" id="1KVP"/>
<dbReference type="PDBsum" id="2BPA"/>
<dbReference type="SMR" id="P03641"/>
<dbReference type="DIP" id="DIP-6198N"/>
<dbReference type="IntAct" id="P03641">
    <property type="interactions" value="2"/>
</dbReference>
<dbReference type="KEGG" id="vg:2546408"/>
<dbReference type="EvolutionaryTrace" id="P03641"/>
<dbReference type="Proteomes" id="UP000005893">
    <property type="component" value="Segment"/>
</dbReference>
<dbReference type="GO" id="GO:0039615">
    <property type="term" value="C:T=1 icosahedral viral capsid"/>
    <property type="evidence" value="ECO:0000314"/>
    <property type="project" value="UniProtKB"/>
</dbReference>
<dbReference type="GO" id="GO:0005198">
    <property type="term" value="F:structural molecule activity"/>
    <property type="evidence" value="ECO:0007669"/>
    <property type="project" value="InterPro"/>
</dbReference>
<dbReference type="GO" id="GO:0046718">
    <property type="term" value="P:symbiont entry into host cell"/>
    <property type="evidence" value="ECO:0007669"/>
    <property type="project" value="UniProtKB-KW"/>
</dbReference>
<dbReference type="FunFam" id="2.60.169.10:FF:000001">
    <property type="entry name" value="Capsid protein F"/>
    <property type="match status" value="1"/>
</dbReference>
<dbReference type="Gene3D" id="2.60.169.10">
    <property type="entry name" value="Microviridae F protein"/>
    <property type="match status" value="1"/>
</dbReference>
<dbReference type="InterPro" id="IPR016184">
    <property type="entry name" value="Capsid/spike_ssDNA_virus"/>
</dbReference>
<dbReference type="InterPro" id="IPR003514">
    <property type="entry name" value="Microviridae_protein_F"/>
</dbReference>
<dbReference type="InterPro" id="IPR037002">
    <property type="entry name" value="Microviridae_protein_F_sf"/>
</dbReference>
<dbReference type="Pfam" id="PF02305">
    <property type="entry name" value="Phage_F"/>
    <property type="match status" value="1"/>
</dbReference>
<dbReference type="SUPFAM" id="SSF88645">
    <property type="entry name" value="ssDNA viruses"/>
    <property type="match status" value="1"/>
</dbReference>
<accession>P03641</accession>
<name>CAPSD_BPPHS</name>
<keyword id="KW-0002">3D-structure</keyword>
<keyword id="KW-0167">Capsid protein</keyword>
<keyword id="KW-0903">Direct protein sequencing</keyword>
<keyword id="KW-1185">Reference proteome</keyword>
<keyword id="KW-1140">T=1 icosahedral capsid protein</keyword>
<keyword id="KW-1171">Viral genome ejection through host cell envelope</keyword>
<keyword id="KW-1162">Viral penetration into host cytoplasm</keyword>
<keyword id="KW-0946">Virion</keyword>
<keyword id="KW-1160">Virus entry into host cell</keyword>
<organism>
    <name type="scientific">Enterobacteria phage phiX174</name>
    <name type="common">Isolate Sanger</name>
    <name type="synonym">Bacteriophage phi-X174</name>
    <dbReference type="NCBI Taxonomy" id="1217068"/>
    <lineage>
        <taxon>Viruses</taxon>
        <taxon>Monodnaviria</taxon>
        <taxon>Sangervirae</taxon>
        <taxon>Phixviricota</taxon>
        <taxon>Malgrandaviricetes</taxon>
        <taxon>Petitvirales</taxon>
        <taxon>Microviridae</taxon>
        <taxon>Bullavirinae</taxon>
        <taxon>Sinsheimervirus</taxon>
        <taxon>Escherichia phage phiX174</taxon>
    </lineage>
</organism>
<evidence type="ECO:0000269" key="1">
    <source>
    </source>
</evidence>
<evidence type="ECO:0000269" key="2">
    <source>
    </source>
</evidence>
<evidence type="ECO:0000269" key="3">
    <source>
    </source>
</evidence>
<evidence type="ECO:0000269" key="4">
    <source>
    </source>
</evidence>
<evidence type="ECO:0000269" key="5">
    <source>
    </source>
</evidence>
<evidence type="ECO:0000269" key="6">
    <source>
    </source>
</evidence>
<evidence type="ECO:0000269" key="7">
    <source>
    </source>
</evidence>
<evidence type="ECO:0000305" key="8"/>
<evidence type="ECO:0007744" key="9">
    <source>
        <dbReference type="PDB" id="1CD3"/>
    </source>
</evidence>
<evidence type="ECO:0007829" key="10">
    <source>
        <dbReference type="PDB" id="1AL0"/>
    </source>
</evidence>
<evidence type="ECO:0007829" key="11">
    <source>
        <dbReference type="PDB" id="2BPA"/>
    </source>
</evidence>
<proteinExistence type="evidence at protein level"/>
<organismHost>
    <name type="scientific">Escherichia coli C</name>
    <dbReference type="NCBI Taxonomy" id="498388"/>
</organismHost>
<gene>
    <name type="primary">F</name>
</gene>
<sequence length="427" mass="48483">MSNIQTGAERMPHDLSHLGFLAGQIGRLITISTTPVIAGDSFEMDAVGALRLSPLRRGLAIDSTVDIFTFYVPHRHVYGEQWIKFMKDGVNATPLPTVNTTGYIDHAAFLGTINPDTNKIPKHLFQGYLNIYNNYFKAPWMPDRTEANPNELNQDDARYGFRCCHLKNIWTAPLPPETELSRQMTTSTTSIDIMGLQAAYANLHTDQERDYFMQRYHDVISSFGGKTSYDADNRPLLVMRSNLWASGYDVDGTDQTSLGQFSGRVQQTYKHSVPRFFVPEHGTMFTLALVRFPPTATKEIQYLNAKGALTYTDIAGDPVLYGNLPPREISMKDVFRSGDSSKKFKIAEGQWYRYAPSYVSPAYHLLEGFPFIQEPPSGDLQERVLIRHHDYDQCFQSVQLLQWNSQVKFNVTVYRNLPTTRDSIMTS</sequence>
<reference key="1">
    <citation type="journal article" date="1977" name="Nature">
        <title>Nucleotide sequence of bacteriophage phi X174 DNA.</title>
        <authorList>
            <person name="Sanger F."/>
            <person name="Air G.M."/>
            <person name="Barrell B.G."/>
            <person name="Brown N.L."/>
            <person name="Coulson A.R."/>
            <person name="Fiddes J.C."/>
            <person name="Hutchison C.A. III"/>
            <person name="Slocombe P.M."/>
            <person name="Smith M."/>
        </authorList>
    </citation>
    <scope>NUCLEOTIDE SEQUENCE [GENOMIC DNA]</scope>
</reference>
<reference key="2">
    <citation type="journal article" date="1978" name="J. Mol. Biol.">
        <title>The nucleotide sequence of bacteriophage phiX174.</title>
        <authorList>
            <person name="Sanger F."/>
            <person name="Coulson A.R."/>
            <person name="Friedmann T."/>
            <person name="Air G.M."/>
            <person name="Barrell B.G."/>
            <person name="Brown N.L."/>
            <person name="Fiddes J.C."/>
            <person name="Hutchison C.A. III"/>
            <person name="Slocombe P.M."/>
            <person name="Smith M."/>
        </authorList>
    </citation>
    <scope>SEQUENCE REVISION</scope>
</reference>
<reference key="3">
    <citation type="journal article" date="1976" name="J. Mol. Biol.">
        <title>Amino acid sequences from the gene F (capsid) protein of bacteriophage phiX174.</title>
        <authorList>
            <person name="Air G.M."/>
        </authorList>
    </citation>
    <scope>PROTEIN SEQUENCE OF 2-95</scope>
</reference>
<reference key="4">
    <citation type="journal article" date="1978" name="J. Mol. Biol.">
        <title>Nucleotide sequence of the F protein coding region of bacteriophage phiX174 and the amino acid sequence of its product.</title>
        <authorList>
            <person name="Air G.M."/>
            <person name="Coulson A.R."/>
            <person name="Fiddes J.C."/>
            <person name="Friedmann T."/>
            <person name="Hutchison C.A. III"/>
            <person name="Sanger F."/>
            <person name="Slocombe P.M."/>
            <person name="Smith A.J.H."/>
        </authorList>
    </citation>
    <scope>PROTEIN SEQUENCE OF 86-427</scope>
</reference>
<reference key="5">
    <citation type="journal article" date="2002" name="J. Virol.">
        <title>phi X174 genome-capsid interactions influence the biophysical properties of the virion: evidence for a scaffolding-like function for the genome during the final stages of morphogenesis.</title>
        <authorList>
            <person name="Hafenstein S."/>
            <person name="Fane B.A."/>
        </authorList>
    </citation>
    <scope>FUNCTION</scope>
</reference>
<reference key="6">
    <citation type="journal article" date="1992" name="Nature">
        <title>Atomic structure of single-stranded DNA bacteriophage phi X174 and its functional implications.</title>
        <authorList>
            <person name="McKenna R."/>
            <person name="Xia D."/>
            <person name="Williangmann P."/>
            <person name="Ilag L.L."/>
            <person name="Krishnaswamy S."/>
            <person name="Rossmann M.G."/>
            <person name="Olson N.H."/>
            <person name="Baker T.S."/>
            <person name="Incardona N.L."/>
        </authorList>
    </citation>
    <scope>X-RAY CRYSTALLOGRAPHY (3.00 ANGSTROMS) OF 2-427</scope>
    <scope>SUBCELLULAR LOCATION</scope>
    <scope>FUNCTION</scope>
</reference>
<reference key="7">
    <citation type="journal article" date="1994" name="J. Mol. Biol.">
        <title>Analysis of the single-stranded DNA bacteriophage phi X174, refined at a resolution of 3.0 A.</title>
        <authorList>
            <person name="McKenna R."/>
            <person name="Ilag L.L."/>
            <person name="Rossmann M.G."/>
        </authorList>
    </citation>
    <scope>X-RAY CRYSTALLOGRAPHY (3.0 ANGSTROMS)</scope>
    <scope>SUBCELLULAR LOCATION</scope>
    <scope>FUNCTION</scope>
</reference>
<reference key="8">
    <citation type="journal article" date="1997" name="Nature">
        <title>Structure of a viral procapsid with molecular scaffolding.</title>
        <authorList>
            <person name="Dokland T."/>
            <person name="McKenna R."/>
            <person name="Ilag L.L."/>
            <person name="Bowman B.R."/>
            <person name="Incardona N.L."/>
            <person name="Fane B.A."/>
            <person name="Rossmann M.G."/>
        </authorList>
    </citation>
    <scope>X-RAY CRYSTALLOGRAPHY (3.5 ANGSTROMS)</scope>
    <scope>INTERACTION WITH J PROTEIN</scope>
    <scope>SUBCELLULAR LOCATION</scope>
</reference>
<reference evidence="9" key="9">
    <citation type="journal article" date="1999" name="J. Mol. Biol.">
        <title>The role of scaffolding proteins in the assembly of the small, single-stranded DNA virus phiX174.</title>
        <authorList>
            <person name="Dokland T."/>
            <person name="Bernal R.A."/>
            <person name="Burch A."/>
            <person name="Pletnev S."/>
            <person name="Fane B.A."/>
            <person name="Rossmann M.G."/>
        </authorList>
    </citation>
    <scope>X-RAY CRYSTALLOGRAPHY (3.50 ANGSTROMS) OF 2-427</scope>
    <scope>SUBUNIT</scope>
    <scope>SUBCELLULAR LOCATION</scope>
</reference>
<reference key="10">
    <citation type="journal article" date="2017" name="Proc. Natl. Acad. Sci. U.S.A.">
        <title>Structural changes of tailless bacteriophage PhiX174 during penetration of bacterial cell walls.</title>
        <authorList>
            <person name="Sun Y."/>
            <person name="Roznowski A.P."/>
            <person name="Tokuda J.M."/>
            <person name="Klose T."/>
            <person name="Mauney A."/>
            <person name="Pollack L."/>
            <person name="Fane B.A."/>
            <person name="Rossmann M.G."/>
        </authorList>
    </citation>
    <scope>FUNCTION</scope>
    <scope>SUBCELLULAR LOCATION</scope>
</reference>
<feature type="initiator methionine" description="Removed; by host" evidence="5">
    <location>
        <position position="1"/>
    </location>
</feature>
<feature type="chain" id="PRO_0000164890" description="Capsid protein F">
    <location>
        <begin position="2"/>
        <end position="427"/>
    </location>
</feature>
<feature type="turn" evidence="10">
    <location>
        <begin position="6"/>
        <end position="8"/>
    </location>
</feature>
<feature type="strand" evidence="11">
    <location>
        <begin position="11"/>
        <end position="14"/>
    </location>
</feature>
<feature type="strand" evidence="11">
    <location>
        <begin position="17"/>
        <end position="23"/>
    </location>
</feature>
<feature type="strand" evidence="11">
    <location>
        <begin position="25"/>
        <end position="36"/>
    </location>
</feature>
<feature type="strand" evidence="11">
    <location>
        <begin position="41"/>
        <end position="52"/>
    </location>
</feature>
<feature type="strand" evidence="11">
    <location>
        <begin position="55"/>
        <end position="58"/>
    </location>
</feature>
<feature type="strand" evidence="11">
    <location>
        <begin position="63"/>
        <end position="73"/>
    </location>
</feature>
<feature type="helix" evidence="11">
    <location>
        <begin position="74"/>
        <end position="88"/>
    </location>
</feature>
<feature type="helix" evidence="11">
    <location>
        <begin position="89"/>
        <end position="91"/>
    </location>
</feature>
<feature type="strand" evidence="11">
    <location>
        <begin position="97"/>
        <end position="99"/>
    </location>
</feature>
<feature type="turn" evidence="11">
    <location>
        <begin position="104"/>
        <end position="107"/>
    </location>
</feature>
<feature type="helix" evidence="11">
    <location>
        <begin position="108"/>
        <end position="110"/>
    </location>
</feature>
<feature type="strand" evidence="11">
    <location>
        <begin position="119"/>
        <end position="121"/>
    </location>
</feature>
<feature type="helix" evidence="11">
    <location>
        <begin position="122"/>
        <end position="135"/>
    </location>
</feature>
<feature type="helix" evidence="11">
    <location>
        <begin position="149"/>
        <end position="151"/>
    </location>
</feature>
<feature type="helix" evidence="11">
    <location>
        <begin position="154"/>
        <end position="159"/>
    </location>
</feature>
<feature type="turn" evidence="11">
    <location>
        <begin position="169"/>
        <end position="171"/>
    </location>
</feature>
<feature type="helix" evidence="11">
    <location>
        <begin position="193"/>
        <end position="211"/>
    </location>
</feature>
<feature type="helix" evidence="11">
    <location>
        <begin position="216"/>
        <end position="222"/>
    </location>
</feature>
<feature type="turn" evidence="11">
    <location>
        <begin position="229"/>
        <end position="233"/>
    </location>
</feature>
<feature type="strand" evidence="11">
    <location>
        <begin position="236"/>
        <end position="245"/>
    </location>
</feature>
<feature type="strand" evidence="11">
    <location>
        <begin position="248"/>
        <end position="251"/>
    </location>
</feature>
<feature type="turn" evidence="11">
    <location>
        <begin position="255"/>
        <end position="259"/>
    </location>
</feature>
<feature type="strand" evidence="11">
    <location>
        <begin position="261"/>
        <end position="264"/>
    </location>
</feature>
<feature type="strand" evidence="11">
    <location>
        <begin position="266"/>
        <end position="277"/>
    </location>
</feature>
<feature type="strand" evidence="11">
    <location>
        <begin position="280"/>
        <end position="291"/>
    </location>
</feature>
<feature type="strand" evidence="11">
    <location>
        <begin position="296"/>
        <end position="299"/>
    </location>
</feature>
<feature type="helix" evidence="11">
    <location>
        <begin position="302"/>
        <end position="305"/>
    </location>
</feature>
<feature type="strand" evidence="11">
    <location>
        <begin position="306"/>
        <end position="308"/>
    </location>
</feature>
<feature type="helix" evidence="11">
    <location>
        <begin position="311"/>
        <end position="314"/>
    </location>
</feature>
<feature type="helix" evidence="11">
    <location>
        <begin position="318"/>
        <end position="321"/>
    </location>
</feature>
<feature type="strand" evidence="11">
    <location>
        <begin position="327"/>
        <end position="330"/>
    </location>
</feature>
<feature type="helix" evidence="11">
    <location>
        <begin position="331"/>
        <end position="333"/>
    </location>
</feature>
<feature type="strand" evidence="11">
    <location>
        <begin position="343"/>
        <end position="346"/>
    </location>
</feature>
<feature type="helix" evidence="11">
    <location>
        <begin position="350"/>
        <end position="352"/>
    </location>
</feature>
<feature type="helix" evidence="11">
    <location>
        <begin position="361"/>
        <end position="363"/>
    </location>
</feature>
<feature type="helix" evidence="11">
    <location>
        <begin position="380"/>
        <end position="384"/>
    </location>
</feature>
<feature type="helix" evidence="11">
    <location>
        <begin position="388"/>
        <end position="394"/>
    </location>
</feature>
<feature type="strand" evidence="11">
    <location>
        <begin position="402"/>
        <end position="415"/>
    </location>
</feature>
<feature type="helix" evidence="11">
    <location>
        <begin position="420"/>
        <end position="424"/>
    </location>
</feature>